<name>DCOR_RAT</name>
<organism>
    <name type="scientific">Rattus norvegicus</name>
    <name type="common">Rat</name>
    <dbReference type="NCBI Taxonomy" id="10116"/>
    <lineage>
        <taxon>Eukaryota</taxon>
        <taxon>Metazoa</taxon>
        <taxon>Chordata</taxon>
        <taxon>Craniata</taxon>
        <taxon>Vertebrata</taxon>
        <taxon>Euteleostomi</taxon>
        <taxon>Mammalia</taxon>
        <taxon>Eutheria</taxon>
        <taxon>Euarchontoglires</taxon>
        <taxon>Glires</taxon>
        <taxon>Rodentia</taxon>
        <taxon>Myomorpha</taxon>
        <taxon>Muroidea</taxon>
        <taxon>Muridae</taxon>
        <taxon>Murinae</taxon>
        <taxon>Rattus</taxon>
    </lineage>
</organism>
<accession>P09057</accession>
<gene>
    <name type="primary">Odc1</name>
    <name type="synonym">Odc</name>
</gene>
<feature type="chain" id="PRO_0000149894" description="Ornithine decarboxylase">
    <location>
        <begin position="1"/>
        <end position="461"/>
    </location>
</feature>
<feature type="active site" description="Proton donor; shared with dimeric partner" evidence="3">
    <location>
        <position position="360"/>
    </location>
</feature>
<feature type="binding site" evidence="3">
    <location>
        <position position="200"/>
    </location>
    <ligand>
        <name>pyridoxal 5'-phosphate</name>
        <dbReference type="ChEBI" id="CHEBI:597326"/>
    </ligand>
</feature>
<feature type="binding site" evidence="3">
    <location>
        <position position="237"/>
    </location>
    <ligand>
        <name>pyridoxal 5'-phosphate</name>
        <dbReference type="ChEBI" id="CHEBI:597326"/>
    </ligand>
</feature>
<feature type="binding site" evidence="3">
    <location>
        <begin position="274"/>
        <end position="277"/>
    </location>
    <ligand>
        <name>pyridoxal 5'-phosphate</name>
        <dbReference type="ChEBI" id="CHEBI:597326"/>
    </ligand>
</feature>
<feature type="binding site" description="in other chain" evidence="2">
    <location>
        <begin position="331"/>
        <end position="332"/>
    </location>
    <ligand>
        <name>substrate</name>
        <note>ligand shared between dimeric partners</note>
    </ligand>
</feature>
<feature type="binding site" evidence="2">
    <location>
        <position position="361"/>
    </location>
    <ligand>
        <name>substrate</name>
        <note>ligand shared between dimeric partners</note>
    </ligand>
</feature>
<feature type="binding site" evidence="3">
    <location>
        <position position="389"/>
    </location>
    <ligand>
        <name>pyridoxal 5'-phosphate</name>
        <dbReference type="ChEBI" id="CHEBI:597326"/>
    </ligand>
</feature>
<feature type="site" description="Stacks against the aromatic ring of pyridoxal phosphate and stabilizes reaction intermediates" evidence="1">
    <location>
        <position position="197"/>
    </location>
</feature>
<feature type="modified residue" description="N6-(pyridoxal phosphate)lysine" evidence="3">
    <location>
        <position position="69"/>
    </location>
</feature>
<feature type="modified residue" description="Phosphoserine; by CK2" evidence="1">
    <location>
        <position position="303"/>
    </location>
</feature>
<feature type="modified residue" description="S-nitrosocysteine" evidence="3">
    <location>
        <position position="360"/>
    </location>
</feature>
<evidence type="ECO:0000250" key="1">
    <source>
        <dbReference type="UniProtKB" id="P00860"/>
    </source>
</evidence>
<evidence type="ECO:0000250" key="2">
    <source>
        <dbReference type="UniProtKB" id="P07805"/>
    </source>
</evidence>
<evidence type="ECO:0000250" key="3">
    <source>
        <dbReference type="UniProtKB" id="P11926"/>
    </source>
</evidence>
<evidence type="ECO:0000305" key="4"/>
<dbReference type="EC" id="4.1.1.17"/>
<dbReference type="EMBL" id="M16982">
    <property type="protein sequence ID" value="AAA41737.1"/>
    <property type="molecule type" value="mRNA"/>
</dbReference>
<dbReference type="EMBL" id="X07944">
    <property type="protein sequence ID" value="CAA30765.1"/>
    <property type="molecule type" value="Genomic_DNA"/>
</dbReference>
<dbReference type="EMBL" id="J04792">
    <property type="protein sequence ID" value="AAA66286.1"/>
    <property type="status" value="ALT_SEQ"/>
    <property type="molecule type" value="Genomic_DNA"/>
</dbReference>
<dbReference type="EMBL" id="J04791">
    <property type="protein sequence ID" value="AAA66164.1"/>
    <property type="molecule type" value="mRNA"/>
</dbReference>
<dbReference type="EMBL" id="BC078882">
    <property type="protein sequence ID" value="AAH78882.1"/>
    <property type="molecule type" value="mRNA"/>
</dbReference>
<dbReference type="PIR" id="A27361">
    <property type="entry name" value="DCRTO"/>
</dbReference>
<dbReference type="RefSeq" id="NP_001289012.1">
    <property type="nucleotide sequence ID" value="NM_001302083.1"/>
</dbReference>
<dbReference type="RefSeq" id="NP_036747.1">
    <property type="nucleotide sequence ID" value="NM_012615.3"/>
</dbReference>
<dbReference type="RefSeq" id="XP_006239969.1">
    <property type="nucleotide sequence ID" value="XM_006239907.5"/>
</dbReference>
<dbReference type="RefSeq" id="XP_006239970.1">
    <property type="nucleotide sequence ID" value="XM_006239908.5"/>
</dbReference>
<dbReference type="RefSeq" id="XP_017449519.1">
    <property type="nucleotide sequence ID" value="XM_017594030.2"/>
</dbReference>
<dbReference type="RefSeq" id="XP_063117614.1">
    <property type="nucleotide sequence ID" value="XM_063261544.1"/>
</dbReference>
<dbReference type="SMR" id="P09057"/>
<dbReference type="FunCoup" id="P09057">
    <property type="interactions" value="492"/>
</dbReference>
<dbReference type="STRING" id="10116.ENSRNOP00000007259"/>
<dbReference type="BindingDB" id="P09057"/>
<dbReference type="ChEMBL" id="CHEMBL3511"/>
<dbReference type="DrugCentral" id="P09057"/>
<dbReference type="iPTMnet" id="P09057"/>
<dbReference type="PhosphoSitePlus" id="P09057"/>
<dbReference type="PaxDb" id="10116-ENSRNOP00000007259"/>
<dbReference type="Ensembl" id="ENSRNOT00000007259.5">
    <property type="protein sequence ID" value="ENSRNOP00000007259.2"/>
    <property type="gene ID" value="ENSRNOG00000005424.5"/>
</dbReference>
<dbReference type="GeneID" id="24609"/>
<dbReference type="KEGG" id="rno:24609"/>
<dbReference type="AGR" id="RGD:3227"/>
<dbReference type="CTD" id="4953"/>
<dbReference type="RGD" id="3227">
    <property type="gene designation" value="Odc1"/>
</dbReference>
<dbReference type="eggNOG" id="KOG0622">
    <property type="taxonomic scope" value="Eukaryota"/>
</dbReference>
<dbReference type="GeneTree" id="ENSGT00950000182995"/>
<dbReference type="InParanoid" id="P09057"/>
<dbReference type="OMA" id="AYCRSMA"/>
<dbReference type="OrthoDB" id="5034579at2759"/>
<dbReference type="PhylomeDB" id="P09057"/>
<dbReference type="TreeFam" id="TF300760"/>
<dbReference type="BRENDA" id="4.1.1.17">
    <property type="organism ID" value="5301"/>
</dbReference>
<dbReference type="Reactome" id="R-RNO-350562">
    <property type="pathway name" value="Regulation of ornithine decarboxylase (ODC)"/>
</dbReference>
<dbReference type="Reactome" id="R-RNO-351202">
    <property type="pathway name" value="Metabolism of polyamines"/>
</dbReference>
<dbReference type="SABIO-RK" id="P09057"/>
<dbReference type="UniPathway" id="UPA00535">
    <property type="reaction ID" value="UER00288"/>
</dbReference>
<dbReference type="PRO" id="PR:P09057"/>
<dbReference type="Proteomes" id="UP000002494">
    <property type="component" value="Chromosome 6"/>
</dbReference>
<dbReference type="Bgee" id="ENSRNOG00000005424">
    <property type="expression patterns" value="Expressed in kidney and 20 other cell types or tissues"/>
</dbReference>
<dbReference type="ExpressionAtlas" id="P09057">
    <property type="expression patterns" value="baseline and differential"/>
</dbReference>
<dbReference type="GO" id="GO:0005737">
    <property type="term" value="C:cytoplasm"/>
    <property type="evidence" value="ECO:0000266"/>
    <property type="project" value="RGD"/>
</dbReference>
<dbReference type="GO" id="GO:0005829">
    <property type="term" value="C:cytosol"/>
    <property type="evidence" value="ECO:0000266"/>
    <property type="project" value="RGD"/>
</dbReference>
<dbReference type="GO" id="GO:0048471">
    <property type="term" value="C:perinuclear region of cytoplasm"/>
    <property type="evidence" value="ECO:0000314"/>
    <property type="project" value="RGD"/>
</dbReference>
<dbReference type="GO" id="GO:0004586">
    <property type="term" value="F:ornithine decarboxylase activity"/>
    <property type="evidence" value="ECO:0000314"/>
    <property type="project" value="RGD"/>
</dbReference>
<dbReference type="GO" id="GO:0042803">
    <property type="term" value="F:protein homodimerization activity"/>
    <property type="evidence" value="ECO:0000250"/>
    <property type="project" value="UniProtKB"/>
</dbReference>
<dbReference type="GO" id="GO:0008283">
    <property type="term" value="P:cell population proliferation"/>
    <property type="evidence" value="ECO:0000266"/>
    <property type="project" value="RGD"/>
</dbReference>
<dbReference type="GO" id="GO:0001822">
    <property type="term" value="P:kidney development"/>
    <property type="evidence" value="ECO:0000266"/>
    <property type="project" value="RGD"/>
</dbReference>
<dbReference type="GO" id="GO:0006595">
    <property type="term" value="P:polyamine metabolic process"/>
    <property type="evidence" value="ECO:0000314"/>
    <property type="project" value="RGD"/>
</dbReference>
<dbReference type="GO" id="GO:0008284">
    <property type="term" value="P:positive regulation of cell population proliferation"/>
    <property type="evidence" value="ECO:0000266"/>
    <property type="project" value="RGD"/>
</dbReference>
<dbReference type="GO" id="GO:0009446">
    <property type="term" value="P:putrescine biosynthetic process"/>
    <property type="evidence" value="ECO:0000314"/>
    <property type="project" value="RGD"/>
</dbReference>
<dbReference type="GO" id="GO:0033387">
    <property type="term" value="P:putrescine biosynthetic process from arginine, via ornithine"/>
    <property type="evidence" value="ECO:0000250"/>
    <property type="project" value="UniProtKB"/>
</dbReference>
<dbReference type="GO" id="GO:0042176">
    <property type="term" value="P:regulation of protein catabolic process"/>
    <property type="evidence" value="ECO:0000250"/>
    <property type="project" value="UniProtKB"/>
</dbReference>
<dbReference type="GO" id="GO:0009615">
    <property type="term" value="P:response to virus"/>
    <property type="evidence" value="ECO:0000266"/>
    <property type="project" value="RGD"/>
</dbReference>
<dbReference type="CDD" id="cd00622">
    <property type="entry name" value="PLPDE_III_ODC"/>
    <property type="match status" value="1"/>
</dbReference>
<dbReference type="FunFam" id="2.40.37.10:FF:000005">
    <property type="entry name" value="Ornithine decarboxylase"/>
    <property type="match status" value="1"/>
</dbReference>
<dbReference type="FunFam" id="3.20.20.10:FF:000006">
    <property type="entry name" value="Ornithine decarboxylase 1"/>
    <property type="match status" value="1"/>
</dbReference>
<dbReference type="Gene3D" id="3.20.20.10">
    <property type="entry name" value="Alanine racemase"/>
    <property type="match status" value="1"/>
</dbReference>
<dbReference type="Gene3D" id="2.40.37.10">
    <property type="entry name" value="Lyase, Ornithine Decarboxylase, Chain A, domain 1"/>
    <property type="match status" value="1"/>
</dbReference>
<dbReference type="InterPro" id="IPR009006">
    <property type="entry name" value="Ala_racemase/Decarboxylase_C"/>
</dbReference>
<dbReference type="InterPro" id="IPR022643">
    <property type="entry name" value="De-COase2_C"/>
</dbReference>
<dbReference type="InterPro" id="IPR022657">
    <property type="entry name" value="De-COase2_CS"/>
</dbReference>
<dbReference type="InterPro" id="IPR022644">
    <property type="entry name" value="De-COase2_N"/>
</dbReference>
<dbReference type="InterPro" id="IPR022653">
    <property type="entry name" value="De-COase2_pyr-phos_BS"/>
</dbReference>
<dbReference type="InterPro" id="IPR000183">
    <property type="entry name" value="Orn/DAP/Arg_de-COase"/>
</dbReference>
<dbReference type="InterPro" id="IPR002433">
    <property type="entry name" value="Orn_de-COase"/>
</dbReference>
<dbReference type="InterPro" id="IPR029066">
    <property type="entry name" value="PLP-binding_barrel"/>
</dbReference>
<dbReference type="PANTHER" id="PTHR11482">
    <property type="entry name" value="ARGININE/DIAMINOPIMELATE/ORNITHINE DECARBOXYLASE"/>
    <property type="match status" value="1"/>
</dbReference>
<dbReference type="PANTHER" id="PTHR11482:SF42">
    <property type="entry name" value="ORNITHINE DECARBOXYLASE"/>
    <property type="match status" value="1"/>
</dbReference>
<dbReference type="Pfam" id="PF02784">
    <property type="entry name" value="Orn_Arg_deC_N"/>
    <property type="match status" value="1"/>
</dbReference>
<dbReference type="Pfam" id="PF00278">
    <property type="entry name" value="Orn_DAP_Arg_deC"/>
    <property type="match status" value="1"/>
</dbReference>
<dbReference type="PRINTS" id="PR01179">
    <property type="entry name" value="ODADCRBXLASE"/>
</dbReference>
<dbReference type="PRINTS" id="PR01182">
    <property type="entry name" value="ORNDCRBXLASE"/>
</dbReference>
<dbReference type="SUPFAM" id="SSF50621">
    <property type="entry name" value="Alanine racemase C-terminal domain-like"/>
    <property type="match status" value="1"/>
</dbReference>
<dbReference type="SUPFAM" id="SSF51419">
    <property type="entry name" value="PLP-binding barrel"/>
    <property type="match status" value="1"/>
</dbReference>
<dbReference type="PROSITE" id="PS00878">
    <property type="entry name" value="ODR_DC_2_1"/>
    <property type="match status" value="1"/>
</dbReference>
<dbReference type="PROSITE" id="PS00879">
    <property type="entry name" value="ODR_DC_2_2"/>
    <property type="match status" value="1"/>
</dbReference>
<reference key="1">
    <citation type="journal article" date="1987" name="Gene">
        <title>Cloning and nucleotide sequence of rat ornithine decarboxylase cDNA.</title>
        <authorList>
            <person name="van Kranen H.J."/>
            <person name="van de Zande L."/>
            <person name="van Kreijl C.F."/>
            <person name="Bisschop A."/>
            <person name="Wieringa B."/>
        </authorList>
    </citation>
    <scope>NUCLEOTIDE SEQUENCE [MRNA]</scope>
</reference>
<reference key="2">
    <citation type="journal article" date="1988" name="Nucleic Acids Res.">
        <title>Nucleotide sequence of the rat ornithine decarboxylase gene.</title>
        <authorList>
            <person name="van Steeg H."/>
            <person name="van Oostrom C.T.M."/>
            <person name="van Kranen H.J."/>
            <person name="van Kreijl C.F."/>
        </authorList>
    </citation>
    <scope>NUCLEOTIDE SEQUENCE [GENOMIC DNA]</scope>
    <source>
        <strain>Wistar</strain>
        <tissue>Liver</tissue>
    </source>
</reference>
<reference key="3">
    <citation type="journal article" date="1989" name="J. Biol. Chem.">
        <title>Rat ornithine decarboxylase gene. Nucleotide sequence, potential regulatory elements, and comparison to the mouse gene.</title>
        <authorList>
            <person name="Wen L."/>
            <person name="Huang J.K."/>
            <person name="Blackshear P.J."/>
        </authorList>
    </citation>
    <scope>NUCLEOTIDE SEQUENCE [GENOMIC DNA / MRNA]</scope>
    <source>
        <strain>Fischer</strain>
        <tissue>Liver</tissue>
    </source>
</reference>
<reference key="4">
    <citation type="journal article" date="2004" name="Genome Res.">
        <title>The status, quality, and expansion of the NIH full-length cDNA project: the Mammalian Gene Collection (MGC).</title>
        <authorList>
            <consortium name="The MGC Project Team"/>
        </authorList>
    </citation>
    <scope>NUCLEOTIDE SEQUENCE [LARGE SCALE MRNA]</scope>
    <source>
        <tissue>Testis</tissue>
    </source>
</reference>
<reference key="5">
    <citation type="journal article" date="1991" name="Biochem. J.">
        <title>The translation in vitro of rat ornithine decarboxylase mRNA is blocked by its 5' untranslated region in a polyamine-independent way.</title>
        <authorList>
            <person name="Van Steeg H."/>
            <person name="Van Oostrom C.T.M."/>
            <person name="Hodemaekers H.M."/>
            <person name="Peters L."/>
            <person name="Thomas A.A."/>
        </authorList>
    </citation>
    <scope>PROTEIN SEQUENCE OF 1-37</scope>
</reference>
<keyword id="KW-0210">Decarboxylase</keyword>
<keyword id="KW-0903">Direct protein sequencing</keyword>
<keyword id="KW-0456">Lyase</keyword>
<keyword id="KW-0597">Phosphoprotein</keyword>
<keyword id="KW-0620">Polyamine biosynthesis</keyword>
<keyword id="KW-0663">Pyridoxal phosphate</keyword>
<keyword id="KW-1185">Reference proteome</keyword>
<keyword id="KW-0702">S-nitrosylation</keyword>
<comment type="function">
    <text evidence="3">Catalyzes the first and rate-limiting step of polyamine biosynthesis that converts ornithine into putrescine, which is the precursor for the polyamines, spermidine and spermine. Polyamines are essential for cell proliferation and are implicated in cellular processes, ranging from DNA replication to apoptosis.</text>
</comment>
<comment type="catalytic activity">
    <reaction evidence="3">
        <text>L-ornithine + H(+) = putrescine + CO2</text>
        <dbReference type="Rhea" id="RHEA:22964"/>
        <dbReference type="ChEBI" id="CHEBI:15378"/>
        <dbReference type="ChEBI" id="CHEBI:16526"/>
        <dbReference type="ChEBI" id="CHEBI:46911"/>
        <dbReference type="ChEBI" id="CHEBI:326268"/>
        <dbReference type="EC" id="4.1.1.17"/>
    </reaction>
</comment>
<comment type="cofactor">
    <cofactor evidence="3">
        <name>pyridoxal 5'-phosphate</name>
        <dbReference type="ChEBI" id="CHEBI:597326"/>
    </cofactor>
</comment>
<comment type="activity regulation">
    <text evidence="3">Inhibited by antizymes (AZs) OAZ1, OAZ2 and OAZ3 in response to polyamine levels. AZs inhibit the assembly of the functional homodimer by binding to ODC monomers. Additionally, OAZ1 targets ODC monomers for ubiquitin-independent proteolytic destruction by the 26S proteasome.</text>
</comment>
<comment type="pathway">
    <text>Amine and polyamine biosynthesis; putrescine biosynthesis via L-ornithine pathway; putrescine from L-ornithine: step 1/1.</text>
</comment>
<comment type="subunit">
    <text evidence="1">Homodimer. Only the dimer is catalytically active, as the active sites are constructed of residues from both monomers.</text>
</comment>
<comment type="similarity">
    <text evidence="4">Belongs to the Orn/Lys/Arg decarboxylase class-II family.</text>
</comment>
<proteinExistence type="evidence at protein level"/>
<sequence>MGSFTKEEFDCHILDEGFTAKDILDQKINEVSSSDDKDAFYVADLGDVLKKHLRWLKALPRVTPFYAVKCNDSRAIVSTLAAIGTGFDCASKTEIQLVQGLGVPPERIIYANPCKQVSQIKYAASNGVQMMTFDSEIELMKVARAHPKAKLVLRIATDDSKAVCRLSVKFGATLKTSRLLLERAKELNIDVIGVSFHVGSGCTDPETFVQAVSDARCVFDMGTEVGFSMYLLDIGGGFPGSEDTKLKFEEITSVINPALDKYFPSDSGVRIIAEPGRYYVASAFTLAVNIIAKKTVWKEQTGSDDEDESNEQTLMYYVNDGVYGSFNCILYDHAHVKALLQKRPKPDEKYYSSSIWGPTCDGLDRIVERCSLPEMHVGDWMLFENMGAYTVAAASTFNGFQRPNIYYVMSRSMWQLMKQIQSHGFPPEVEEQDVGTLPMSCAQESGMDRHPAACASASINV</sequence>
<protein>
    <recommendedName>
        <fullName>Ornithine decarboxylase</fullName>
        <shortName>ODC</shortName>
        <ecNumber>4.1.1.17</ecNumber>
    </recommendedName>
</protein>